<keyword id="KW-0002">3D-structure</keyword>
<keyword id="KW-0040">ANK repeat</keyword>
<keyword id="KW-0106">Calcium</keyword>
<keyword id="KW-0107">Calcium channel</keyword>
<keyword id="KW-0109">Calcium transport</keyword>
<keyword id="KW-0112">Calmodulin-binding</keyword>
<keyword id="KW-1003">Cell membrane</keyword>
<keyword id="KW-0325">Glycoprotein</keyword>
<keyword id="KW-0407">Ion channel</keyword>
<keyword id="KW-0406">Ion transport</keyword>
<keyword id="KW-0472">Membrane</keyword>
<keyword id="KW-0479">Metal-binding</keyword>
<keyword id="KW-0597">Phosphoprotein</keyword>
<keyword id="KW-1185">Reference proteome</keyword>
<keyword id="KW-0677">Repeat</keyword>
<keyword id="KW-0812">Transmembrane</keyword>
<keyword id="KW-1133">Transmembrane helix</keyword>
<keyword id="KW-0813">Transport</keyword>
<accession>Q9XSM3</accession>
<dbReference type="EMBL" id="AJ133128">
    <property type="protein sequence ID" value="CAB40138.1"/>
    <property type="molecule type" value="mRNA"/>
</dbReference>
<dbReference type="RefSeq" id="NP_001076126.1">
    <property type="nucleotide sequence ID" value="NM_001082657.1"/>
</dbReference>
<dbReference type="PDB" id="6B5V">
    <property type="method" value="EM"/>
    <property type="resolution" value="4.80 A"/>
    <property type="chains" value="A/B/C/D=1-730"/>
</dbReference>
<dbReference type="PDB" id="6DMR">
    <property type="method" value="EM"/>
    <property type="resolution" value="3.90 A"/>
    <property type="chains" value="A/B/C/D=1-730"/>
</dbReference>
<dbReference type="PDB" id="6DMU">
    <property type="method" value="EM"/>
    <property type="resolution" value="4.00 A"/>
    <property type="chains" value="A/B/C/D=1-730"/>
</dbReference>
<dbReference type="PDB" id="6DMW">
    <property type="method" value="EM"/>
    <property type="resolution" value="4.40 A"/>
    <property type="chains" value="A/B/C/D=1-730"/>
</dbReference>
<dbReference type="PDB" id="6O1N">
    <property type="method" value="EM"/>
    <property type="resolution" value="2.90 A"/>
    <property type="chains" value="A/B/C/D=1-730"/>
</dbReference>
<dbReference type="PDB" id="6O1P">
    <property type="method" value="EM"/>
    <property type="resolution" value="3.00 A"/>
    <property type="chains" value="A/B/C/D=1-730"/>
</dbReference>
<dbReference type="PDB" id="6O1U">
    <property type="method" value="EM"/>
    <property type="resolution" value="2.80 A"/>
    <property type="chains" value="A/B/C/D=1-730"/>
</dbReference>
<dbReference type="PDB" id="6O20">
    <property type="method" value="EM"/>
    <property type="resolution" value="3.30 A"/>
    <property type="chains" value="A/B/C/D/E=1-730"/>
</dbReference>
<dbReference type="PDB" id="6PBE">
    <property type="method" value="EM"/>
    <property type="resolution" value="3.78 A"/>
    <property type="chains" value="A/B/C/D=1-730"/>
</dbReference>
<dbReference type="PDB" id="6PBF">
    <property type="method" value="EM"/>
    <property type="resolution" value="4.20 A"/>
    <property type="chains" value="A/B/C/D=1-730"/>
</dbReference>
<dbReference type="PDB" id="7T6J">
    <property type="method" value="EM"/>
    <property type="resolution" value="3.20 A"/>
    <property type="chains" value="A/B/C/D=1-730"/>
</dbReference>
<dbReference type="PDB" id="7T6K">
    <property type="method" value="EM"/>
    <property type="resolution" value="3.00 A"/>
    <property type="chains" value="A/B/C/D=1-730"/>
</dbReference>
<dbReference type="PDB" id="7T6L">
    <property type="method" value="EM"/>
    <property type="resolution" value="3.70 A"/>
    <property type="chains" value="A/B/C/D=1-730"/>
</dbReference>
<dbReference type="PDB" id="7T6M">
    <property type="method" value="EM"/>
    <property type="resolution" value="2.80 A"/>
    <property type="chains" value="A/B/C/D=1-730"/>
</dbReference>
<dbReference type="PDB" id="7T6N">
    <property type="method" value="EM"/>
    <property type="resolution" value="2.90 A"/>
    <property type="chains" value="A/B/C/D=1-730"/>
</dbReference>
<dbReference type="PDB" id="7T6O">
    <property type="method" value="EM"/>
    <property type="resolution" value="2.60 A"/>
    <property type="chains" value="A/B/C/D=1-730"/>
</dbReference>
<dbReference type="PDB" id="7T6P">
    <property type="method" value="EM"/>
    <property type="resolution" value="2.80 A"/>
    <property type="chains" value="A/B/C/D=1-730"/>
</dbReference>
<dbReference type="PDB" id="7T6Q">
    <property type="method" value="EM"/>
    <property type="resolution" value="3.40 A"/>
    <property type="chains" value="A/B/C/D=1-730"/>
</dbReference>
<dbReference type="PDB" id="7T6R">
    <property type="method" value="EM"/>
    <property type="resolution" value="3.00 A"/>
    <property type="chains" value="A/B/C/D=1-730"/>
</dbReference>
<dbReference type="PDB" id="8FFN">
    <property type="method" value="EM"/>
    <property type="resolution" value="2.96 A"/>
    <property type="chains" value="A/B/C/D=1-730"/>
</dbReference>
<dbReference type="PDB" id="8FFO">
    <property type="method" value="EM"/>
    <property type="resolution" value="3.50 A"/>
    <property type="chains" value="A/B/C/D=1-730"/>
</dbReference>
<dbReference type="PDB" id="8FFQ">
    <property type="method" value="EM"/>
    <property type="resolution" value="2.65 A"/>
    <property type="chains" value="A/B/C/D=1-730"/>
</dbReference>
<dbReference type="PDB" id="8FHH">
    <property type="method" value="EM"/>
    <property type="resolution" value="3.09 A"/>
    <property type="chains" value="A/B/C/D=1-730"/>
</dbReference>
<dbReference type="PDB" id="8FHI">
    <property type="method" value="EM"/>
    <property type="resolution" value="3.25 A"/>
    <property type="chains" value="A/B/C/D=1-730"/>
</dbReference>
<dbReference type="PDB" id="8TF2">
    <property type="method" value="EM"/>
    <property type="resolution" value="2.57 A"/>
    <property type="chains" value="A/B/C/D=1-730"/>
</dbReference>
<dbReference type="PDB" id="8TF3">
    <property type="method" value="EM"/>
    <property type="resolution" value="2.94 A"/>
    <property type="chains" value="A/B/C/D=1-730"/>
</dbReference>
<dbReference type="PDB" id="8TF4">
    <property type="method" value="EM"/>
    <property type="resolution" value="2.86 A"/>
    <property type="chains" value="A/B/C/D=1-730"/>
</dbReference>
<dbReference type="PDBsum" id="6B5V"/>
<dbReference type="PDBsum" id="6DMR"/>
<dbReference type="PDBsum" id="6DMU"/>
<dbReference type="PDBsum" id="6DMW"/>
<dbReference type="PDBsum" id="6O1N"/>
<dbReference type="PDBsum" id="6O1P"/>
<dbReference type="PDBsum" id="6O1U"/>
<dbReference type="PDBsum" id="6O20"/>
<dbReference type="PDBsum" id="6PBE"/>
<dbReference type="PDBsum" id="6PBF"/>
<dbReference type="PDBsum" id="7T6J"/>
<dbReference type="PDBsum" id="7T6K"/>
<dbReference type="PDBsum" id="7T6L"/>
<dbReference type="PDBsum" id="7T6M"/>
<dbReference type="PDBsum" id="7T6N"/>
<dbReference type="PDBsum" id="7T6O"/>
<dbReference type="PDBsum" id="7T6P"/>
<dbReference type="PDBsum" id="7T6Q"/>
<dbReference type="PDBsum" id="7T6R"/>
<dbReference type="PDBsum" id="8FFN"/>
<dbReference type="PDBsum" id="8FFO"/>
<dbReference type="PDBsum" id="8FFQ"/>
<dbReference type="PDBsum" id="8FHH"/>
<dbReference type="PDBsum" id="8FHI"/>
<dbReference type="PDBsum" id="8TF2"/>
<dbReference type="PDBsum" id="8TF3"/>
<dbReference type="PDBsum" id="8TF4"/>
<dbReference type="EMDB" id="EMD-0593"/>
<dbReference type="EMDB" id="EMD-0594"/>
<dbReference type="EMDB" id="EMD-0605"/>
<dbReference type="EMDB" id="EMD-0607"/>
<dbReference type="EMDB" id="EMD-20291"/>
<dbReference type="EMDB" id="EMD-20292"/>
<dbReference type="EMDB" id="EMD-25716"/>
<dbReference type="EMDB" id="EMD-25717"/>
<dbReference type="EMDB" id="EMD-25718"/>
<dbReference type="EMDB" id="EMD-25719"/>
<dbReference type="EMDB" id="EMD-25720"/>
<dbReference type="EMDB" id="EMD-25721"/>
<dbReference type="EMDB" id="EMD-25723"/>
<dbReference type="EMDB" id="EMD-25724"/>
<dbReference type="EMDB" id="EMD-25725"/>
<dbReference type="EMDB" id="EMD-29048"/>
<dbReference type="EMDB" id="EMD-29049"/>
<dbReference type="EMDB" id="EMD-29051"/>
<dbReference type="EMDB" id="EMD-29085"/>
<dbReference type="EMDB" id="EMD-29086"/>
<dbReference type="EMDB" id="EMD-41217"/>
<dbReference type="EMDB" id="EMD-41218"/>
<dbReference type="EMDB" id="EMD-41219"/>
<dbReference type="EMDB" id="EMD-7058"/>
<dbReference type="EMDB" id="EMD-7965"/>
<dbReference type="EMDB" id="EMD-7966"/>
<dbReference type="EMDB" id="EMD-7967"/>
<dbReference type="SMR" id="Q9XSM3"/>
<dbReference type="DIP" id="DIP-46154N"/>
<dbReference type="FunCoup" id="Q9XSM3">
    <property type="interactions" value="13"/>
</dbReference>
<dbReference type="IntAct" id="Q9XSM3">
    <property type="interactions" value="1"/>
</dbReference>
<dbReference type="STRING" id="9986.ENSOCUP00000006536"/>
<dbReference type="TCDB" id="1.A.4.2.3">
    <property type="family name" value="the transient receptor potential ca2+/cation channel (trp-cc) family"/>
</dbReference>
<dbReference type="GlyCosmos" id="Q9XSM3">
    <property type="glycosylation" value="1 site, No reported glycans"/>
</dbReference>
<dbReference type="iPTMnet" id="Q9XSM3"/>
<dbReference type="PaxDb" id="9986-ENSOCUP00000006536"/>
<dbReference type="Ensembl" id="ENSOCUT00000007559.4">
    <property type="protein sequence ID" value="ENSOCUP00000006536.2"/>
    <property type="gene ID" value="ENSOCUG00000007559.4"/>
</dbReference>
<dbReference type="GeneID" id="100009364"/>
<dbReference type="KEGG" id="ocu:100009364"/>
<dbReference type="CTD" id="56302"/>
<dbReference type="eggNOG" id="KOG3676">
    <property type="taxonomic scope" value="Eukaryota"/>
</dbReference>
<dbReference type="GeneTree" id="ENSGT00940000161809"/>
<dbReference type="HOGENOM" id="CLU_012795_2_0_1"/>
<dbReference type="InParanoid" id="Q9XSM3"/>
<dbReference type="OMA" id="AYETHED"/>
<dbReference type="OrthoDB" id="533508at2759"/>
<dbReference type="TreeFam" id="TF314711"/>
<dbReference type="Proteomes" id="UP000001811">
    <property type="component" value="Chromosome 7"/>
</dbReference>
<dbReference type="Bgee" id="ENSOCUG00000007559">
    <property type="expression patterns" value="Expressed in kidney and 4 other cell types or tissues"/>
</dbReference>
<dbReference type="GO" id="GO:0016324">
    <property type="term" value="C:apical plasma membrane"/>
    <property type="evidence" value="ECO:0000314"/>
    <property type="project" value="UniProtKB"/>
</dbReference>
<dbReference type="GO" id="GO:0005886">
    <property type="term" value="C:plasma membrane"/>
    <property type="evidence" value="ECO:0000314"/>
    <property type="project" value="UniProtKB"/>
</dbReference>
<dbReference type="GO" id="GO:0005262">
    <property type="term" value="F:calcium channel activity"/>
    <property type="evidence" value="ECO:0000314"/>
    <property type="project" value="UniProtKB"/>
</dbReference>
<dbReference type="GO" id="GO:0005516">
    <property type="term" value="F:calmodulin binding"/>
    <property type="evidence" value="ECO:0007669"/>
    <property type="project" value="UniProtKB-KW"/>
</dbReference>
<dbReference type="GO" id="GO:0042802">
    <property type="term" value="F:identical protein binding"/>
    <property type="evidence" value="ECO:0000353"/>
    <property type="project" value="UniProtKB"/>
</dbReference>
<dbReference type="GO" id="GO:0046872">
    <property type="term" value="F:metal ion binding"/>
    <property type="evidence" value="ECO:0007669"/>
    <property type="project" value="UniProtKB-KW"/>
</dbReference>
<dbReference type="GO" id="GO:0055074">
    <property type="term" value="P:calcium ion homeostasis"/>
    <property type="evidence" value="ECO:0000250"/>
    <property type="project" value="UniProtKB"/>
</dbReference>
<dbReference type="GO" id="GO:0098703">
    <property type="term" value="P:calcium ion import across plasma membrane"/>
    <property type="evidence" value="ECO:0000314"/>
    <property type="project" value="UniProtKB"/>
</dbReference>
<dbReference type="GO" id="GO:0070588">
    <property type="term" value="P:calcium ion transmembrane transport"/>
    <property type="evidence" value="ECO:0000314"/>
    <property type="project" value="UniProtKB"/>
</dbReference>
<dbReference type="GO" id="GO:0006816">
    <property type="term" value="P:calcium ion transport"/>
    <property type="evidence" value="ECO:0000250"/>
    <property type="project" value="UniProtKB"/>
</dbReference>
<dbReference type="GO" id="GO:0051289">
    <property type="term" value="P:protein homotetramerization"/>
    <property type="evidence" value="ECO:0000314"/>
    <property type="project" value="UniProtKB"/>
</dbReference>
<dbReference type="GO" id="GO:0035809">
    <property type="term" value="P:regulation of urine volume"/>
    <property type="evidence" value="ECO:0000250"/>
    <property type="project" value="UniProtKB"/>
</dbReference>
<dbReference type="CDD" id="cd22296">
    <property type="entry name" value="CBD_TRPV5_C"/>
    <property type="match status" value="1"/>
</dbReference>
<dbReference type="CDD" id="cd22192">
    <property type="entry name" value="TRPV5-6"/>
    <property type="match status" value="1"/>
</dbReference>
<dbReference type="FunFam" id="1.25.40.20:FF:000177">
    <property type="entry name" value="Transient receptor potential cation channel subfamily V member 6"/>
    <property type="match status" value="1"/>
</dbReference>
<dbReference type="Gene3D" id="1.25.40.20">
    <property type="entry name" value="Ankyrin repeat-containing domain"/>
    <property type="match status" value="2"/>
</dbReference>
<dbReference type="InterPro" id="IPR002110">
    <property type="entry name" value="Ankyrin_rpt"/>
</dbReference>
<dbReference type="InterPro" id="IPR036770">
    <property type="entry name" value="Ankyrin_rpt-contain_sf"/>
</dbReference>
<dbReference type="InterPro" id="IPR005821">
    <property type="entry name" value="Ion_trans_dom"/>
</dbReference>
<dbReference type="InterPro" id="IPR024862">
    <property type="entry name" value="TRPV"/>
</dbReference>
<dbReference type="InterPro" id="IPR008346">
    <property type="entry name" value="TRPV5"/>
</dbReference>
<dbReference type="InterPro" id="IPR008344">
    <property type="entry name" value="TRPV5/TRPV6"/>
</dbReference>
<dbReference type="NCBIfam" id="TIGR00870">
    <property type="entry name" value="trp"/>
    <property type="match status" value="1"/>
</dbReference>
<dbReference type="PANTHER" id="PTHR10582:SF11">
    <property type="entry name" value="TRANSIENT RECEPTOR POTENTIAL CATION CHANNEL SUBFAMILY V MEMBER 5"/>
    <property type="match status" value="1"/>
</dbReference>
<dbReference type="PANTHER" id="PTHR10582">
    <property type="entry name" value="TRANSIENT RECEPTOR POTENTIAL ION CHANNEL PROTEIN"/>
    <property type="match status" value="1"/>
</dbReference>
<dbReference type="Pfam" id="PF00023">
    <property type="entry name" value="Ank"/>
    <property type="match status" value="1"/>
</dbReference>
<dbReference type="Pfam" id="PF12796">
    <property type="entry name" value="Ank_2"/>
    <property type="match status" value="1"/>
</dbReference>
<dbReference type="Pfam" id="PF00520">
    <property type="entry name" value="Ion_trans"/>
    <property type="match status" value="1"/>
</dbReference>
<dbReference type="PRINTS" id="PR01415">
    <property type="entry name" value="ANKYRIN"/>
</dbReference>
<dbReference type="PRINTS" id="PR01765">
    <property type="entry name" value="ECACCHANNEL"/>
</dbReference>
<dbReference type="PRINTS" id="PR01767">
    <property type="entry name" value="ECACCHANNEL2"/>
</dbReference>
<dbReference type="SMART" id="SM00248">
    <property type="entry name" value="ANK"/>
    <property type="match status" value="5"/>
</dbReference>
<dbReference type="SUPFAM" id="SSF48403">
    <property type="entry name" value="Ankyrin repeat"/>
    <property type="match status" value="1"/>
</dbReference>
<dbReference type="PROSITE" id="PS50297">
    <property type="entry name" value="ANK_REP_REGION"/>
    <property type="match status" value="1"/>
</dbReference>
<dbReference type="PROSITE" id="PS50088">
    <property type="entry name" value="ANK_REPEAT"/>
    <property type="match status" value="2"/>
</dbReference>
<reference key="1">
    <citation type="journal article" date="1999" name="J. Biol. Chem.">
        <title>Molecular identification of the apical Ca2+ channel in 1, 25-dihydroxyvitamin D3-responsive epithelia.</title>
        <authorList>
            <person name="Hoenderop J.G.J."/>
            <person name="van der Kemp A.W.C.M."/>
            <person name="Hartog A."/>
            <person name="van de Graaf S.F.J."/>
            <person name="van Os C.H."/>
            <person name="Willems P.H.G.M."/>
            <person name="Bindels R.J.M."/>
        </authorList>
    </citation>
    <scope>NUCLEOTIDE SEQUENCE [MRNA]</scope>
    <scope>FUNCTION</scope>
    <scope>SUBCELLULAR LOCATION</scope>
    <scope>TISSUE SPECIFICITY</scope>
    <scope>TRANSPORTER ACTIVITY</scope>
    <source>
        <strain>New Zealand white</strain>
        <tissue>Kidney</tissue>
    </source>
</reference>
<reference key="2">
    <citation type="journal article" date="2001" name="J. Biol. Chem.">
        <title>The single pore residue Asp542 determines Ca2+ permeation and Mg2+ block of the epithelial Ca2+ channel.</title>
        <authorList>
            <person name="Nilius B."/>
            <person name="Vennekens R."/>
            <person name="Prenen J."/>
            <person name="Hoenderop J.G."/>
            <person name="Droogmans G."/>
            <person name="Bindels R.J.M."/>
        </authorList>
    </citation>
    <scope>FUNCTION</scope>
    <scope>SUBCELLULAR LOCATION</scope>
    <scope>CHARACTERIZATION OF CHANNEL PORE</scope>
    <scope>MUTAGENESIS OF GLU-535; ASP-542 AND ASP-550</scope>
    <scope>TRANSPORTER ACTIVITY</scope>
</reference>
<reference key="3">
    <citation type="journal article" date="2003" name="EMBO J.">
        <title>Homo- and heterotetrameric architecture of the epithelial Ca2+ channels TRPV5 and TRPV6.</title>
        <authorList>
            <person name="Hoenderop J.G."/>
            <person name="Voets T."/>
            <person name="Hoefs S."/>
            <person name="Weidema F."/>
            <person name="Prenen J."/>
            <person name="Nilius B."/>
            <person name="Bindels R.J.M."/>
        </authorList>
    </citation>
    <scope>FUNCTION</scope>
    <scope>SUBUNIT</scope>
    <scope>INTERACTION WITH TRPV6</scope>
    <scope>SUBCELLULAR LOCATION</scope>
    <scope>GLYCOSYLATION</scope>
    <scope>TRANSPORTER ACTIVITY</scope>
</reference>
<reference key="4">
    <citation type="journal article" date="2003" name="Pflugers Arch.">
        <title>The carboxyl terminus of the epithelial Ca(2+) channel ECaC1 is involved in Ca(2+)-dependent inactivation.</title>
        <authorList>
            <person name="Nilius B."/>
            <person name="Weidema F."/>
            <person name="Prenen J."/>
            <person name="Hoenderop J.G."/>
            <person name="Vennekens R."/>
            <person name="Hoefs S."/>
            <person name="Droogmans G."/>
            <person name="Bindels R.J.M."/>
        </authorList>
    </citation>
    <scope>REGION</scope>
</reference>
<reference evidence="12" key="5">
    <citation type="journal article" date="2018" name="Nat. Struct. Mol. Biol.">
        <title>Structural basis of TRPV5 channel inhibition by econazole revealed by cryo-EM.</title>
        <authorList>
            <person name="Hughes T.E.T."/>
            <person name="Lodowski D.T."/>
            <person name="Huynh K.W."/>
            <person name="Yazici A."/>
            <person name="Del Rosario J."/>
            <person name="Kapoor A."/>
            <person name="Basak S."/>
            <person name="Samanta A."/>
            <person name="Han X."/>
            <person name="Chakrapani S."/>
            <person name="Zhou Z.H."/>
            <person name="Filizola M."/>
            <person name="Rohacs T."/>
            <person name="Han S."/>
            <person name="Moiseenkova-Bell V.Y."/>
        </authorList>
    </citation>
    <scope>STRUCTURE BY ELECTRON MICROSCOPY (4.80 ANGSTROMS) IN COMPLEX WITH THE INHIBITOR ECONAZOLE AND CALCIUM IONS</scope>
    <scope>FUNCTION</scope>
    <scope>SUBCELLULAR LOCATION</scope>
    <scope>TOPOLOGY</scope>
    <scope>SUBUNIT</scope>
    <scope>MUTAGENESIS OF PHE-425</scope>
    <scope>TRANSPORTER ACTIVITY</scope>
</reference>
<protein>
    <recommendedName>
        <fullName>Transient receptor potential cation channel subfamily V member 5</fullName>
        <shortName>TrpV5</shortName>
    </recommendedName>
    <alternativeName>
        <fullName evidence="9 10">Epithelial calcium channel 1</fullName>
        <shortName evidence="9 10">ECaC1</shortName>
    </alternativeName>
    <alternativeName>
        <fullName>Osm-9-like TRP channel 3</fullName>
        <shortName>OTRPC3</shortName>
    </alternativeName>
</protein>
<proteinExistence type="evidence at protein level"/>
<organism>
    <name type="scientific">Oryctolagus cuniculus</name>
    <name type="common">Rabbit</name>
    <dbReference type="NCBI Taxonomy" id="9986"/>
    <lineage>
        <taxon>Eukaryota</taxon>
        <taxon>Metazoa</taxon>
        <taxon>Chordata</taxon>
        <taxon>Craniata</taxon>
        <taxon>Vertebrata</taxon>
        <taxon>Euteleostomi</taxon>
        <taxon>Mammalia</taxon>
        <taxon>Eutheria</taxon>
        <taxon>Euarchontoglires</taxon>
        <taxon>Glires</taxon>
        <taxon>Lagomorpha</taxon>
        <taxon>Leporidae</taxon>
        <taxon>Oryctolagus</taxon>
    </lineage>
</organism>
<name>TRPV5_RABIT</name>
<feature type="chain" id="PRO_0000215352" description="Transient receptor potential cation channel subfamily V member 5">
    <location>
        <begin position="1"/>
        <end position="730"/>
    </location>
</feature>
<feature type="topological domain" description="Cytoplasmic" evidence="8">
    <location>
        <begin position="1"/>
        <end position="327"/>
    </location>
</feature>
<feature type="transmembrane region" description="Helical" evidence="8">
    <location>
        <begin position="328"/>
        <end position="348"/>
    </location>
</feature>
<feature type="topological domain" description="Extracellular" evidence="8">
    <location>
        <begin position="349"/>
        <end position="385"/>
    </location>
</feature>
<feature type="transmembrane region" description="Helical" evidence="8">
    <location>
        <begin position="386"/>
        <end position="408"/>
    </location>
</feature>
<feature type="topological domain" description="Cytoplasmic" evidence="8">
    <location>
        <begin position="409"/>
        <end position="419"/>
    </location>
</feature>
<feature type="transmembrane region" description="Helical" evidence="8">
    <location>
        <begin position="420"/>
        <end position="442"/>
    </location>
</feature>
<feature type="topological domain" description="Extracellular" evidence="8">
    <location>
        <begin position="443"/>
        <end position="448"/>
    </location>
</feature>
<feature type="transmembrane region" description="Helical" evidence="8">
    <location>
        <begin position="449"/>
        <end position="469"/>
    </location>
</feature>
<feature type="topological domain" description="Cytoplasmic" evidence="8">
    <location>
        <begin position="470"/>
        <end position="492"/>
    </location>
</feature>
<feature type="transmembrane region" description="Helical" evidence="8">
    <location>
        <begin position="493"/>
        <end position="513"/>
    </location>
</feature>
<feature type="intramembrane region" description="Pore-forming" evidence="8">
    <location>
        <begin position="524"/>
        <end position="544"/>
    </location>
</feature>
<feature type="transmembrane region" description="Helical" evidence="8">
    <location>
        <begin position="557"/>
        <end position="577"/>
    </location>
</feature>
<feature type="topological domain" description="Cytoplasmic" evidence="8">
    <location>
        <begin position="578"/>
        <end position="730"/>
    </location>
</feature>
<feature type="repeat" description="ANK 1" evidence="3">
    <location>
        <begin position="44"/>
        <end position="74"/>
    </location>
</feature>
<feature type="repeat" description="ANK 2" evidence="3">
    <location>
        <begin position="78"/>
        <end position="107"/>
    </location>
</feature>
<feature type="repeat" description="ANK 3" evidence="3">
    <location>
        <begin position="116"/>
        <end position="145"/>
    </location>
</feature>
<feature type="repeat" description="ANK 4" evidence="3">
    <location>
        <begin position="162"/>
        <end position="191"/>
    </location>
</feature>
<feature type="repeat" description="ANK 5" evidence="3">
    <location>
        <begin position="195"/>
        <end position="228"/>
    </location>
</feature>
<feature type="repeat" description="ANK 6" evidence="3">
    <location>
        <begin position="239"/>
        <end position="268"/>
    </location>
</feature>
<feature type="region of interest" description="Interaction with S100A10" evidence="1">
    <location>
        <begin position="598"/>
        <end position="602"/>
    </location>
</feature>
<feature type="region of interest" description="Involved in Ca(2+)-dependent inactivation" evidence="7">
    <location>
        <begin position="650"/>
        <end position="653"/>
    </location>
</feature>
<feature type="region of interest" description="Involved in Ca(2+)-dependent inactivation" evidence="7">
    <location>
        <begin position="701"/>
        <end position="730"/>
    </location>
</feature>
<feature type="binding site" evidence="8">
    <location>
        <position position="542"/>
    </location>
    <ligand>
        <name>Ca(2+)</name>
        <dbReference type="ChEBI" id="CHEBI:29108"/>
        <note>ligand shared between two neighboring subunits</note>
    </ligand>
</feature>
<feature type="modified residue" description="Phosphothreonine" evidence="1">
    <location>
        <position position="685"/>
    </location>
</feature>
<feature type="modified residue" description="Phosphoserine" evidence="1">
    <location>
        <position position="689"/>
    </location>
</feature>
<feature type="glycosylation site" description="N-linked (GlcNAc...) asparagine" evidence="3">
    <location>
        <position position="358"/>
    </location>
</feature>
<feature type="mutagenesis site" description="Decreased inhibition by the synthetic drug econazole." evidence="8">
    <original>F</original>
    <variation>A</variation>
    <location>
        <position position="425"/>
    </location>
</feature>
<feature type="mutagenesis site" description="Minor effects on Ca(2+) permeation." evidence="5">
    <original>E</original>
    <variation>A</variation>
    <location>
        <position position="535"/>
    </location>
</feature>
<feature type="mutagenesis site" description="Abolishes Ca(2+) permeation and Ca(2+)-dependent current decay; no effect on monovalent cations permeation." evidence="5">
    <original>D</original>
    <variation>A</variation>
    <location>
        <position position="542"/>
    </location>
</feature>
<feature type="mutagenesis site" description="Attenuates Ca(2+) permeation and Ca(2+)-dependent current decay." evidence="5">
    <original>D</original>
    <variation>E</variation>
    <variation>N</variation>
    <variation>M</variation>
    <location>
        <position position="542"/>
    </location>
</feature>
<feature type="mutagenesis site" description="Abolishes channel activity." evidence="5">
    <original>D</original>
    <variation>K</variation>
    <location>
        <position position="542"/>
    </location>
</feature>
<feature type="mutagenesis site" description="Minor effects on Ca(2+) permeation." evidence="5">
    <original>D</original>
    <variation>A</variation>
    <location>
        <position position="550"/>
    </location>
</feature>
<feature type="helix" evidence="22">
    <location>
        <begin position="29"/>
        <end position="45"/>
    </location>
</feature>
<feature type="helix" evidence="22">
    <location>
        <begin position="48"/>
        <end position="55"/>
    </location>
</feature>
<feature type="helix" evidence="22">
    <location>
        <begin position="58"/>
        <end position="66"/>
    </location>
</feature>
<feature type="strand" evidence="18">
    <location>
        <begin position="68"/>
        <end position="70"/>
    </location>
</feature>
<feature type="strand" evidence="19">
    <location>
        <begin position="77"/>
        <end position="79"/>
    </location>
</feature>
<feature type="helix" evidence="22">
    <location>
        <begin position="82"/>
        <end position="88"/>
    </location>
</feature>
<feature type="helix" evidence="22">
    <location>
        <begin position="92"/>
        <end position="101"/>
    </location>
</feature>
<feature type="helix" evidence="22">
    <location>
        <begin position="103"/>
        <end position="107"/>
    </location>
</feature>
<feature type="helix" evidence="22">
    <location>
        <begin position="113"/>
        <end position="115"/>
    </location>
</feature>
<feature type="helix" evidence="22">
    <location>
        <begin position="120"/>
        <end position="126"/>
    </location>
</feature>
<feature type="helix" evidence="22">
    <location>
        <begin position="130"/>
        <end position="137"/>
    </location>
</feature>
<feature type="turn" evidence="22">
    <location>
        <begin position="138"/>
        <end position="140"/>
    </location>
</feature>
<feature type="helix" evidence="22">
    <location>
        <begin position="150"/>
        <end position="152"/>
    </location>
</feature>
<feature type="strand" evidence="22">
    <location>
        <begin position="153"/>
        <end position="155"/>
    </location>
</feature>
<feature type="strand" evidence="19">
    <location>
        <begin position="156"/>
        <end position="159"/>
    </location>
</feature>
<feature type="helix" evidence="22">
    <location>
        <begin position="166"/>
        <end position="173"/>
    </location>
</feature>
<feature type="helix" evidence="22">
    <location>
        <begin position="176"/>
        <end position="184"/>
    </location>
</feature>
<feature type="helix" evidence="20">
    <location>
        <begin position="194"/>
        <end position="196"/>
    </location>
</feature>
<feature type="helix" evidence="22">
    <location>
        <begin position="199"/>
        <end position="204"/>
    </location>
</feature>
<feature type="strand" evidence="17">
    <location>
        <begin position="205"/>
        <end position="207"/>
    </location>
</feature>
<feature type="helix" evidence="22">
    <location>
        <begin position="209"/>
        <end position="220"/>
    </location>
</feature>
<feature type="turn" evidence="21">
    <location>
        <begin position="221"/>
        <end position="223"/>
    </location>
</feature>
<feature type="strand" evidence="14">
    <location>
        <begin position="228"/>
        <end position="230"/>
    </location>
</feature>
<feature type="helix" evidence="22">
    <location>
        <begin position="232"/>
        <end position="234"/>
    </location>
</feature>
<feature type="strand" evidence="13">
    <location>
        <begin position="238"/>
        <end position="240"/>
    </location>
</feature>
<feature type="helix" evidence="22">
    <location>
        <begin position="243"/>
        <end position="249"/>
    </location>
</feature>
<feature type="helix" evidence="22">
    <location>
        <begin position="253"/>
        <end position="260"/>
    </location>
</feature>
<feature type="strand" evidence="22">
    <location>
        <begin position="263"/>
        <end position="270"/>
    </location>
</feature>
<feature type="strand" evidence="22">
    <location>
        <begin position="273"/>
        <end position="279"/>
    </location>
</feature>
<feature type="helix" evidence="22">
    <location>
        <begin position="281"/>
        <end position="284"/>
    </location>
</feature>
<feature type="strand" evidence="14">
    <location>
        <begin position="287"/>
        <end position="289"/>
    </location>
</feature>
<feature type="helix" evidence="22">
    <location>
        <begin position="292"/>
        <end position="297"/>
    </location>
</feature>
<feature type="strand" evidence="19">
    <location>
        <begin position="300"/>
        <end position="302"/>
    </location>
</feature>
<feature type="helix" evidence="22">
    <location>
        <begin position="304"/>
        <end position="307"/>
    </location>
</feature>
<feature type="helix" evidence="22">
    <location>
        <begin position="311"/>
        <end position="323"/>
    </location>
</feature>
<feature type="helix" evidence="22">
    <location>
        <begin position="325"/>
        <end position="348"/>
    </location>
</feature>
<feature type="strand" evidence="22">
    <location>
        <begin position="352"/>
        <end position="354"/>
    </location>
</feature>
<feature type="turn" evidence="15">
    <location>
        <begin position="362"/>
        <end position="365"/>
    </location>
</feature>
<feature type="strand" evidence="22">
    <location>
        <begin position="368"/>
        <end position="370"/>
    </location>
</feature>
<feature type="helix" evidence="22">
    <location>
        <begin position="373"/>
        <end position="376"/>
    </location>
</feature>
<feature type="helix" evidence="22">
    <location>
        <begin position="380"/>
        <end position="410"/>
    </location>
</feature>
<feature type="helix" evidence="22">
    <location>
        <begin position="412"/>
        <end position="417"/>
    </location>
</feature>
<feature type="turn" evidence="22">
    <location>
        <begin position="419"/>
        <end position="422"/>
    </location>
</feature>
<feature type="helix" evidence="22">
    <location>
        <begin position="423"/>
        <end position="444"/>
    </location>
</feature>
<feature type="helix" evidence="22">
    <location>
        <begin position="451"/>
        <end position="464"/>
    </location>
</feature>
<feature type="helix" evidence="22">
    <location>
        <begin position="465"/>
        <end position="471"/>
    </location>
</feature>
<feature type="turn" evidence="22">
    <location>
        <begin position="473"/>
        <end position="475"/>
    </location>
</feature>
<feature type="helix" evidence="22">
    <location>
        <begin position="476"/>
        <end position="487"/>
    </location>
</feature>
<feature type="helix" evidence="22">
    <location>
        <begin position="489"/>
        <end position="512"/>
    </location>
</feature>
<feature type="strand" evidence="13">
    <location>
        <begin position="513"/>
        <end position="515"/>
    </location>
</feature>
<feature type="turn" evidence="22">
    <location>
        <begin position="517"/>
        <end position="519"/>
    </location>
</feature>
<feature type="helix" evidence="15">
    <location>
        <begin position="521"/>
        <end position="523"/>
    </location>
</feature>
<feature type="helix" evidence="22">
    <location>
        <begin position="526"/>
        <end position="537"/>
    </location>
</feature>
<feature type="strand" evidence="17">
    <location>
        <begin position="547"/>
        <end position="549"/>
    </location>
</feature>
<feature type="helix" evidence="22">
    <location>
        <begin position="553"/>
        <end position="565"/>
    </location>
</feature>
<feature type="turn" evidence="22">
    <location>
        <begin position="566"/>
        <end position="569"/>
    </location>
</feature>
<feature type="helix" evidence="22">
    <location>
        <begin position="570"/>
        <end position="607"/>
    </location>
</feature>
<feature type="helix" evidence="22">
    <location>
        <begin position="610"/>
        <end position="612"/>
    </location>
</feature>
<feature type="strand" evidence="22">
    <location>
        <begin position="617"/>
        <end position="619"/>
    </location>
</feature>
<feature type="helix" evidence="22">
    <location>
        <begin position="620"/>
        <end position="623"/>
    </location>
</feature>
<feature type="strand" evidence="22">
    <location>
        <begin position="629"/>
        <end position="636"/>
    </location>
</feature>
<feature type="helix" evidence="16">
    <location>
        <begin position="642"/>
        <end position="652"/>
    </location>
</feature>
<feature type="helix" evidence="16">
    <location>
        <begin position="699"/>
        <end position="709"/>
    </location>
</feature>
<gene>
    <name type="primary">Trpv5</name>
    <name evidence="10" type="synonym">Ecac1</name>
</gene>
<sequence length="730" mass="82814">MGACPPKAKGPWAQLQKLLISWPVGEQDWEQYRDRVNMLQQERIRDSPLLQAAKENDLRLLKILLLNQSCDFQQRGAVGETALHVAALYDNLEAATLLMEAAPELAKEPALCEPFVGQTALHIAVMNQNLNLVRALLARGASVSARATGAAFRRSPHNLIYYGEHPLSFAACVGSEEIVRLLIEHGADIRAQDSLGNTVLHILILQPNKTFACQMYNLLLSYDEHSDHLQSLELVPNHQGLTPFKLAGVEGNTVMFQHLMQKRKHVQWTCGPLTSTLYDLTEIDSWGEELSFLELVVSSKKREARQILEQTPVKELVSFKWKKYGRPYFCVLASLYILYMICFTTCCIYRPLKLRDDNRTDPRDITILQQKLLQEAYVTHQDNIRLVGELVTVTGAVIILLLEIPDIFRVGASRYFGQTILGGPFHVIIITYASLVLLTMVMRLTNMNGEVVPLSFALVLGWCSVMYFARGFQMLGPFTIMIQKMIFGDLMRFCWLMAVVILGFASAFHITFQTEDPNNLGEFSDYPTALFSTFELFLTIIDGPANYSVDLPFMYCITYAAFAIIATLLMLNLFIAMMGDTHWRVAQERDELWRAQVVATTVMLERKMPRFLWPRSGICGYEYGLGDRWFLRVENHHDQNPLRVLRYVEAFKCSDKEDGQEQLSEKRPSTVESGMLSRASVAFQTPSLSRTTSQSSNSHRGWEILRRNTLGHLNLGLDLGEGDGEEVYHF</sequence>
<comment type="function">
    <text evidence="1 2 4 5 6 8">Constitutively active calcium selective cation channel thought to be involved in Ca(2+) reabsorption in kidney and intestine (PubMed:10085067, PubMed:11035011, PubMed:12574114, PubMed:29323279). Required for normal Ca(2+) reabsorption in the kidney distal convoluted tubules (By similarity). The channel is activated by low internal calcium level and the current exhibits an inward rectification (PubMed:29323279). A Ca(2+)-dependent feedback regulation includes fast channel inactivation and slow current decay (PubMed:11035011). Heteromeric assembly with TRPV6 seems to modify channel properties. TRPV5-TRPV6 heteromultimeric concatemers exhibit voltage-dependent gating (PubMed:12574114).</text>
</comment>
<comment type="catalytic activity">
    <reaction evidence="4 5 6 8">
        <text>Ca(2+)(in) = Ca(2+)(out)</text>
        <dbReference type="Rhea" id="RHEA:29671"/>
        <dbReference type="ChEBI" id="CHEBI:29108"/>
    </reaction>
</comment>
<comment type="activity regulation">
    <text evidence="2">Activated by WNK3.</text>
</comment>
<comment type="subunit">
    <text evidence="1 6 8">Homotetramer (PubMed:29323279). Probably forms heterotetramers with TRPV6 (PubMed:12574114). Interacts with TRPV6 (PubMed:12574114). Interacts with S100A10 and probably with the ANAX2-S100A10 heterotetramer. The interaction with S100A10 is required for the trafficking to the plasma membrane. Interacts with calmodulin. Interacts with BSPRY, which results in its inactivation.</text>
</comment>
<comment type="subcellular location">
    <subcellularLocation>
        <location evidence="4 5 6 8">Cell membrane</location>
        <topology evidence="8">Multi-pass membrane protein</topology>
    </subcellularLocation>
    <subcellularLocation>
        <location evidence="4">Apical cell membrane</location>
        <topology evidence="8">Multi-pass membrane protein</topology>
    </subcellularLocation>
    <text evidence="1 2">Colocalized with S100A10 and ANAX2 along the apical domain of kidney distal tubular cells (By similarity). The expression of the glycosylated form in the cell membrane is increased in the presence of WNK3 (By similarity).</text>
</comment>
<comment type="tissue specificity">
    <text evidence="4">Detected in kidney cortex, in distal convoluted tubules and cortical collecting ducts (at protein level) (PubMed:10085067). Detected in duodenum, jejunum, ileum, kidney and placenta (PubMed:10085067).</text>
</comment>
<comment type="PTM">
    <text evidence="6">Glycosylated.</text>
</comment>
<comment type="similarity">
    <text evidence="11">Belongs to the transient receptor (TC 1.A.4) family. TrpV subfamily. TRPV5 sub-subfamily.</text>
</comment>
<evidence type="ECO:0000250" key="1">
    <source>
        <dbReference type="UniProtKB" id="P69744"/>
    </source>
</evidence>
<evidence type="ECO:0000250" key="2">
    <source>
        <dbReference type="UniProtKB" id="Q9NQA5"/>
    </source>
</evidence>
<evidence type="ECO:0000255" key="3"/>
<evidence type="ECO:0000269" key="4">
    <source>
    </source>
</evidence>
<evidence type="ECO:0000269" key="5">
    <source>
    </source>
</evidence>
<evidence type="ECO:0000269" key="6">
    <source>
    </source>
</evidence>
<evidence type="ECO:0000269" key="7">
    <source>
    </source>
</evidence>
<evidence type="ECO:0000269" key="8">
    <source>
    </source>
</evidence>
<evidence type="ECO:0000303" key="9">
    <source>
    </source>
</evidence>
<evidence type="ECO:0000303" key="10">
    <source>
    </source>
</evidence>
<evidence type="ECO:0000305" key="11"/>
<evidence type="ECO:0007744" key="12">
    <source>
        <dbReference type="PDB" id="6B5V"/>
    </source>
</evidence>
<evidence type="ECO:0007829" key="13">
    <source>
        <dbReference type="PDB" id="6O1N"/>
    </source>
</evidence>
<evidence type="ECO:0007829" key="14">
    <source>
        <dbReference type="PDB" id="6O1P"/>
    </source>
</evidence>
<evidence type="ECO:0007829" key="15">
    <source>
        <dbReference type="PDB" id="6O1U"/>
    </source>
</evidence>
<evidence type="ECO:0007829" key="16">
    <source>
        <dbReference type="PDB" id="6O20"/>
    </source>
</evidence>
<evidence type="ECO:0007829" key="17">
    <source>
        <dbReference type="PDB" id="7T6M"/>
    </source>
</evidence>
<evidence type="ECO:0007829" key="18">
    <source>
        <dbReference type="PDB" id="7T6N"/>
    </source>
</evidence>
<evidence type="ECO:0007829" key="19">
    <source>
        <dbReference type="PDB" id="7T6O"/>
    </source>
</evidence>
<evidence type="ECO:0007829" key="20">
    <source>
        <dbReference type="PDB" id="7T6P"/>
    </source>
</evidence>
<evidence type="ECO:0007829" key="21">
    <source>
        <dbReference type="PDB" id="8FFQ"/>
    </source>
</evidence>
<evidence type="ECO:0007829" key="22">
    <source>
        <dbReference type="PDB" id="8TF2"/>
    </source>
</evidence>